<feature type="chain" id="PRO_0000165112" description="Uncharacterized 6.2 kDa protein in pin-nrdC intergenic region">
    <location>
        <begin position="1"/>
        <end position="51"/>
    </location>
</feature>
<dbReference type="EMBL" id="Y00122">
    <property type="status" value="NOT_ANNOTATED_CDS"/>
    <property type="molecule type" value="Genomic_DNA"/>
</dbReference>
<dbReference type="EMBL" id="AF158101">
    <property type="protein sequence ID" value="AAD42478.1"/>
    <property type="molecule type" value="Genomic_DNA"/>
</dbReference>
<dbReference type="RefSeq" id="NP_049695.1">
    <property type="nucleotide sequence ID" value="NC_000866.4"/>
</dbReference>
<dbReference type="GeneID" id="1258739"/>
<dbReference type="KEGG" id="vg:1258739"/>
<dbReference type="Proteomes" id="UP000009087">
    <property type="component" value="Segment"/>
</dbReference>
<organism>
    <name type="scientific">Enterobacteria phage T4</name>
    <name type="common">Bacteriophage T4</name>
    <dbReference type="NCBI Taxonomy" id="10665"/>
    <lineage>
        <taxon>Viruses</taxon>
        <taxon>Duplodnaviria</taxon>
        <taxon>Heunggongvirae</taxon>
        <taxon>Uroviricota</taxon>
        <taxon>Caudoviricetes</taxon>
        <taxon>Straboviridae</taxon>
        <taxon>Tevenvirinae</taxon>
        <taxon>Tequatrovirus</taxon>
    </lineage>
</organism>
<sequence>MDYAIKPWWAARWETVEPEPEEPVYTDEETVYNEPTINDLIDMEMGHDYSR</sequence>
<reference key="1">
    <citation type="journal article" date="1987" name="Nucleic Acids Res.">
        <title>Nucleotide sequence and primary structures of gene products coded for by the T4 genome between map positions 48.266 kb and 39.166 kb.</title>
        <authorList>
            <person name="Tomaschewski J."/>
            <person name="Rueger W."/>
        </authorList>
    </citation>
    <scope>NUCLEOTIDE SEQUENCE [GENOMIC DNA]</scope>
    <source>
        <strain>C</strain>
    </source>
</reference>
<reference key="2">
    <citation type="journal article" date="2003" name="Microbiol. Mol. Biol. Rev.">
        <title>Bacteriophage T4 genome.</title>
        <authorList>
            <person name="Miller E.S."/>
            <person name="Kutter E."/>
            <person name="Mosig G."/>
            <person name="Arisaka F."/>
            <person name="Kunisawa T."/>
            <person name="Ruger W."/>
        </authorList>
    </citation>
    <scope>NUCLEOTIDE SEQUENCE [LARGE SCALE GENOMIC DNA]</scope>
</reference>
<keyword id="KW-1185">Reference proteome</keyword>
<gene>
    <name type="primary">y04J</name>
    <name type="synonym">49.1</name>
</gene>
<protein>
    <recommendedName>
        <fullName>Uncharacterized 6.2 kDa protein in pin-nrdC intergenic region</fullName>
    </recommendedName>
</protein>
<organismHost>
    <name type="scientific">Escherichia coli</name>
    <dbReference type="NCBI Taxonomy" id="562"/>
</organismHost>
<name>Y04J_BPT4</name>
<proteinExistence type="predicted"/>
<accession>P39490</accession>